<name>BSHC_STAS1</name>
<proteinExistence type="inferred from homology"/>
<protein>
    <recommendedName>
        <fullName evidence="1">Putative cysteine ligase BshC</fullName>
        <ecNumber evidence="1">6.-.-.-</ecNumber>
    </recommendedName>
</protein>
<accession>Q49WV9</accession>
<evidence type="ECO:0000255" key="1">
    <source>
        <dbReference type="HAMAP-Rule" id="MF_01867"/>
    </source>
</evidence>
<reference key="1">
    <citation type="journal article" date="2005" name="Proc. Natl. Acad. Sci. U.S.A.">
        <title>Whole genome sequence of Staphylococcus saprophyticus reveals the pathogenesis of uncomplicated urinary tract infection.</title>
        <authorList>
            <person name="Kuroda M."/>
            <person name="Yamashita A."/>
            <person name="Hirakawa H."/>
            <person name="Kumano M."/>
            <person name="Morikawa K."/>
            <person name="Higashide M."/>
            <person name="Maruyama A."/>
            <person name="Inose Y."/>
            <person name="Matoba K."/>
            <person name="Toh H."/>
            <person name="Kuhara S."/>
            <person name="Hattori M."/>
            <person name="Ohta T."/>
        </authorList>
    </citation>
    <scope>NUCLEOTIDE SEQUENCE [LARGE SCALE GENOMIC DNA]</scope>
    <source>
        <strain>ATCC 15305 / DSM 20229 / NCIMB 8711 / NCTC 7292 / S-41</strain>
    </source>
</reference>
<feature type="chain" id="PRO_0000378270" description="Putative cysteine ligase BshC">
    <location>
        <begin position="1"/>
        <end position="537"/>
    </location>
</feature>
<comment type="function">
    <text evidence="1">Involved in bacillithiol (BSH) biosynthesis. May catalyze the last step of the pathway, the addition of cysteine to glucosamine malate (GlcN-Mal) to generate BSH.</text>
</comment>
<comment type="similarity">
    <text evidence="1">Belongs to the BshC family.</text>
</comment>
<sequence>MDCMITKLNEKDQFISKIKDSDSKIGQFYHFDAMQEKSYSERLSMSNNGREVALAQVIKNYMSDLTLTEKQLQNISLLSEGAKVIIGGQQAGLFGGPLYTFHKIFSIITMSEKLSKDYNTNVIPVFWIAGEDHDFDEVNHTYAYNAQNAKLQKIKYHTMTPPEASVSTYYPDKAQLKDALKLFFKEMNETTHSKQMIEMCTKIIDQYDSWTDMFKALLNEVFKAYGLLLIDANNTELRKLEQPFIQKIIEHHQDVDASFRNNQQNTIANGLEQMIQTDTNVHLFLHEDNMRQLLTFKDNQFYLSKSDKYMTKEELLKILEVEPERFSNNVVTRPIMEEWLFNTVAFIGGPSEIKYWTELSEVFNTLDVSMPIVLPRLRISYLYPRTEKLLSQYQLKQHSIIEQGIEKDKEKFIRAQASQTFVDKVEEIKVQQEKLYQSLLTEVAGNNDNQLLVEKNNHIHQKQYEYLINRYLLNIERKNEISMKHFKELSETLHPMGGLQERIWNPLQIMNDFGIDVFSPSTYPPLSYTFDHIIVKP</sequence>
<keyword id="KW-0436">Ligase</keyword>
<keyword id="KW-1185">Reference proteome</keyword>
<dbReference type="EC" id="6.-.-.-" evidence="1"/>
<dbReference type="EMBL" id="AP008934">
    <property type="protein sequence ID" value="BAE18739.1"/>
    <property type="molecule type" value="Genomic_DNA"/>
</dbReference>
<dbReference type="RefSeq" id="WP_011303331.1">
    <property type="nucleotide sequence ID" value="NC_007350.1"/>
</dbReference>
<dbReference type="SMR" id="Q49WV9"/>
<dbReference type="GeneID" id="3615338"/>
<dbReference type="KEGG" id="ssp:SSP1594"/>
<dbReference type="PATRIC" id="fig|342451.11.peg.1596"/>
<dbReference type="eggNOG" id="COG4365">
    <property type="taxonomic scope" value="Bacteria"/>
</dbReference>
<dbReference type="HOGENOM" id="CLU_022249_1_0_9"/>
<dbReference type="OrthoDB" id="9765151at2"/>
<dbReference type="Proteomes" id="UP000006371">
    <property type="component" value="Chromosome"/>
</dbReference>
<dbReference type="GO" id="GO:0016874">
    <property type="term" value="F:ligase activity"/>
    <property type="evidence" value="ECO:0007669"/>
    <property type="project" value="UniProtKB-UniRule"/>
</dbReference>
<dbReference type="HAMAP" id="MF_01867">
    <property type="entry name" value="BshC"/>
    <property type="match status" value="1"/>
</dbReference>
<dbReference type="InterPro" id="IPR011199">
    <property type="entry name" value="Bacillithiol_biosynth_BshC"/>
</dbReference>
<dbReference type="InterPro" id="IPR055399">
    <property type="entry name" value="CC_BshC"/>
</dbReference>
<dbReference type="InterPro" id="IPR055398">
    <property type="entry name" value="Rossmann-like_BshC"/>
</dbReference>
<dbReference type="NCBIfam" id="TIGR03998">
    <property type="entry name" value="thiol_BshC"/>
    <property type="match status" value="1"/>
</dbReference>
<dbReference type="Pfam" id="PF24850">
    <property type="entry name" value="CC_BshC"/>
    <property type="match status" value="1"/>
</dbReference>
<dbReference type="Pfam" id="PF10079">
    <property type="entry name" value="Rossmann-like_BshC"/>
    <property type="match status" value="1"/>
</dbReference>
<dbReference type="PIRSF" id="PIRSF012535">
    <property type="entry name" value="UCP012535"/>
    <property type="match status" value="1"/>
</dbReference>
<gene>
    <name evidence="1" type="primary">bshC</name>
    <name type="ordered locus">SSP1594</name>
</gene>
<organism>
    <name type="scientific">Staphylococcus saprophyticus subsp. saprophyticus (strain ATCC 15305 / DSM 20229 / NCIMB 8711 / NCTC 7292 / S-41)</name>
    <dbReference type="NCBI Taxonomy" id="342451"/>
    <lineage>
        <taxon>Bacteria</taxon>
        <taxon>Bacillati</taxon>
        <taxon>Bacillota</taxon>
        <taxon>Bacilli</taxon>
        <taxon>Bacillales</taxon>
        <taxon>Staphylococcaceae</taxon>
        <taxon>Staphylococcus</taxon>
    </lineage>
</organism>